<keyword id="KW-0378">Hydrolase</keyword>
<keyword id="KW-0408">Iron</keyword>
<keyword id="KW-0479">Metal-binding</keyword>
<keyword id="KW-0648">Protein biosynthesis</keyword>
<keyword id="KW-1185">Reference proteome</keyword>
<reference key="1">
    <citation type="journal article" date="2007" name="J. Bacteriol.">
        <title>Genome-wide transcriptional changes in Streptococcus gordonii in response to competence signaling peptide.</title>
        <authorList>
            <person name="Vickerman M.M."/>
            <person name="Iobst S."/>
            <person name="Jesionowski A.M."/>
            <person name="Gill S.R."/>
        </authorList>
    </citation>
    <scope>NUCLEOTIDE SEQUENCE [LARGE SCALE GENOMIC DNA]</scope>
    <source>
        <strain>Challis / ATCC 35105 / BCRC 15272 / CH1 / DL1 / V288</strain>
    </source>
</reference>
<feature type="chain" id="PRO_1000076952" description="Peptide deformylase">
    <location>
        <begin position="1"/>
        <end position="204"/>
    </location>
</feature>
<feature type="active site" evidence="1">
    <location>
        <position position="175"/>
    </location>
</feature>
<feature type="binding site" evidence="1">
    <location>
        <position position="131"/>
    </location>
    <ligand>
        <name>Fe cation</name>
        <dbReference type="ChEBI" id="CHEBI:24875"/>
    </ligand>
</feature>
<feature type="binding site" evidence="1">
    <location>
        <position position="174"/>
    </location>
    <ligand>
        <name>Fe cation</name>
        <dbReference type="ChEBI" id="CHEBI:24875"/>
    </ligand>
</feature>
<feature type="binding site" evidence="1">
    <location>
        <position position="178"/>
    </location>
    <ligand>
        <name>Fe cation</name>
        <dbReference type="ChEBI" id="CHEBI:24875"/>
    </ligand>
</feature>
<gene>
    <name evidence="1" type="primary">def</name>
    <name type="ordered locus">SGO_0321</name>
</gene>
<accession>A8AV30</accession>
<proteinExistence type="inferred from homology"/>
<organism>
    <name type="scientific">Streptococcus gordonii (strain Challis / ATCC 35105 / BCRC 15272 / CH1 / DL1 / V288)</name>
    <dbReference type="NCBI Taxonomy" id="467705"/>
    <lineage>
        <taxon>Bacteria</taxon>
        <taxon>Bacillati</taxon>
        <taxon>Bacillota</taxon>
        <taxon>Bacilli</taxon>
        <taxon>Lactobacillales</taxon>
        <taxon>Streptococcaceae</taxon>
        <taxon>Streptococcus</taxon>
    </lineage>
</organism>
<dbReference type="EC" id="3.5.1.88" evidence="1"/>
<dbReference type="EMBL" id="CP000725">
    <property type="protein sequence ID" value="ABV09658.1"/>
    <property type="molecule type" value="Genomic_DNA"/>
</dbReference>
<dbReference type="RefSeq" id="WP_011999849.1">
    <property type="nucleotide sequence ID" value="NC_009785.1"/>
</dbReference>
<dbReference type="SMR" id="A8AV30"/>
<dbReference type="STRING" id="467705.SGO_0321"/>
<dbReference type="KEGG" id="sgo:SGO_0321"/>
<dbReference type="eggNOG" id="COG0242">
    <property type="taxonomic scope" value="Bacteria"/>
</dbReference>
<dbReference type="HOGENOM" id="CLU_061901_4_0_9"/>
<dbReference type="Proteomes" id="UP000001131">
    <property type="component" value="Chromosome"/>
</dbReference>
<dbReference type="GO" id="GO:0046872">
    <property type="term" value="F:metal ion binding"/>
    <property type="evidence" value="ECO:0007669"/>
    <property type="project" value="UniProtKB-KW"/>
</dbReference>
<dbReference type="GO" id="GO:0042586">
    <property type="term" value="F:peptide deformylase activity"/>
    <property type="evidence" value="ECO:0007669"/>
    <property type="project" value="UniProtKB-UniRule"/>
</dbReference>
<dbReference type="GO" id="GO:0043686">
    <property type="term" value="P:co-translational protein modification"/>
    <property type="evidence" value="ECO:0007669"/>
    <property type="project" value="TreeGrafter"/>
</dbReference>
<dbReference type="GO" id="GO:0006412">
    <property type="term" value="P:translation"/>
    <property type="evidence" value="ECO:0007669"/>
    <property type="project" value="UniProtKB-UniRule"/>
</dbReference>
<dbReference type="CDD" id="cd00487">
    <property type="entry name" value="Pep_deformylase"/>
    <property type="match status" value="1"/>
</dbReference>
<dbReference type="FunFam" id="3.90.45.10:FF:000002">
    <property type="entry name" value="Peptide deformylase"/>
    <property type="match status" value="1"/>
</dbReference>
<dbReference type="Gene3D" id="3.90.45.10">
    <property type="entry name" value="Peptide deformylase"/>
    <property type="match status" value="1"/>
</dbReference>
<dbReference type="HAMAP" id="MF_00163">
    <property type="entry name" value="Pep_deformylase"/>
    <property type="match status" value="1"/>
</dbReference>
<dbReference type="InterPro" id="IPR023635">
    <property type="entry name" value="Peptide_deformylase"/>
</dbReference>
<dbReference type="InterPro" id="IPR036821">
    <property type="entry name" value="Peptide_deformylase_sf"/>
</dbReference>
<dbReference type="NCBIfam" id="TIGR00079">
    <property type="entry name" value="pept_deformyl"/>
    <property type="match status" value="1"/>
</dbReference>
<dbReference type="PANTHER" id="PTHR10458">
    <property type="entry name" value="PEPTIDE DEFORMYLASE"/>
    <property type="match status" value="1"/>
</dbReference>
<dbReference type="PANTHER" id="PTHR10458:SF8">
    <property type="entry name" value="PEPTIDE DEFORMYLASE 2"/>
    <property type="match status" value="1"/>
</dbReference>
<dbReference type="Pfam" id="PF01327">
    <property type="entry name" value="Pep_deformylase"/>
    <property type="match status" value="1"/>
</dbReference>
<dbReference type="PIRSF" id="PIRSF004749">
    <property type="entry name" value="Pep_def"/>
    <property type="match status" value="1"/>
</dbReference>
<dbReference type="PRINTS" id="PR01576">
    <property type="entry name" value="PDEFORMYLASE"/>
</dbReference>
<dbReference type="SUPFAM" id="SSF56420">
    <property type="entry name" value="Peptide deformylase"/>
    <property type="match status" value="1"/>
</dbReference>
<comment type="function">
    <text evidence="1">Removes the formyl group from the N-terminal Met of newly synthesized proteins. Requires at least a dipeptide for an efficient rate of reaction. N-terminal L-methionine is a prerequisite for activity but the enzyme has broad specificity at other positions.</text>
</comment>
<comment type="catalytic activity">
    <reaction evidence="1">
        <text>N-terminal N-formyl-L-methionyl-[peptide] + H2O = N-terminal L-methionyl-[peptide] + formate</text>
        <dbReference type="Rhea" id="RHEA:24420"/>
        <dbReference type="Rhea" id="RHEA-COMP:10639"/>
        <dbReference type="Rhea" id="RHEA-COMP:10640"/>
        <dbReference type="ChEBI" id="CHEBI:15377"/>
        <dbReference type="ChEBI" id="CHEBI:15740"/>
        <dbReference type="ChEBI" id="CHEBI:49298"/>
        <dbReference type="ChEBI" id="CHEBI:64731"/>
        <dbReference type="EC" id="3.5.1.88"/>
    </reaction>
</comment>
<comment type="cofactor">
    <cofactor evidence="1">
        <name>Fe(2+)</name>
        <dbReference type="ChEBI" id="CHEBI:29033"/>
    </cofactor>
    <text evidence="1">Binds 1 Fe(2+) ion.</text>
</comment>
<comment type="similarity">
    <text evidence="1">Belongs to the polypeptide deformylase family.</text>
</comment>
<protein>
    <recommendedName>
        <fullName evidence="1">Peptide deformylase</fullName>
        <shortName evidence="1">PDF</shortName>
        <ecNumber evidence="1">3.5.1.88</ecNumber>
    </recommendedName>
    <alternativeName>
        <fullName evidence="1">Polypeptide deformylase</fullName>
    </alternativeName>
</protein>
<evidence type="ECO:0000255" key="1">
    <source>
        <dbReference type="HAMAP-Rule" id="MF_00163"/>
    </source>
</evidence>
<name>DEF_STRGC</name>
<sequence>MSVIEKLIKPAHLIDMRDIIREGNPTLRAVAEEVSFPLADEDILLGEKMMQFLHNSQDPVMAEKLGLRGGVGLAAPQLDISRRIIAVLLPNPEDENGNSPQEAYALKEVMYNPKIVAHSVQDAALADGEGCLSVDRDVPGYVVRHARVTVDYFDKNGEKHRVKLKGYKAIVVQHEIDHINGIMFYDRINETDPFAIKEGMLILE</sequence>